<organism>
    <name type="scientific">Escherichia coli (strain K12)</name>
    <dbReference type="NCBI Taxonomy" id="83333"/>
    <lineage>
        <taxon>Bacteria</taxon>
        <taxon>Pseudomonadati</taxon>
        <taxon>Pseudomonadota</taxon>
        <taxon>Gammaproteobacteria</taxon>
        <taxon>Enterobacterales</taxon>
        <taxon>Enterobacteriaceae</taxon>
        <taxon>Escherichia</taxon>
    </lineage>
</organism>
<proteinExistence type="evidence at protein level"/>
<comment type="function">
    <text evidence="4">Involved in the degradation of the LPS-assembly protein LptD. Degrades LptD that have engaged the Bam complex but are stalled at an early step in the outer membrane protein assembly process.</text>
</comment>
<comment type="cofactor">
    <cofactor evidence="1">
        <name>Zn(2+)</name>
        <dbReference type="ChEBI" id="CHEBI:29105"/>
    </cofactor>
    <text evidence="1">Binds 1 zinc ion per subunit.</text>
</comment>
<comment type="interaction">
    <interactant intactId="EBI-9128400">
        <id>P43674</id>
    </interactant>
    <interactant intactId="EBI-562426">
        <id>P0AAM7</id>
        <label>hybG</label>
    </interactant>
    <organismsDiffer>false</organismsDiffer>
    <experiments>2</experiments>
</comment>
<comment type="subcellular location">
    <subcellularLocation>
        <location evidence="5">Cell inner membrane</location>
        <topology evidence="2">Lipid-anchor</topology>
    </subcellularLocation>
</comment>
<comment type="miscellaneous">
    <text evidence="4">YcaL, BepA and DegP degrade stalled LptD substrate at distinct points in the outer membrane protein assembly.</text>
</comment>
<comment type="similarity">
    <text evidence="5">Belongs to the peptidase M48B family.</text>
</comment>
<comment type="sequence caution" evidence="5">
    <conflict type="erroneous initiation">
        <sequence resource="EMBL-CDS" id="AAA81515"/>
    </conflict>
    <text>Extended N-terminus.</text>
</comment>
<protein>
    <recommendedName>
        <fullName evidence="5">Metalloprotease YcaL</fullName>
        <ecNumber evidence="4">3.4.-.-</ecNumber>
    </recommendedName>
</protein>
<accession>P43674</accession>
<accession>P75840</accession>
<feature type="signal peptide" evidence="2">
    <location>
        <begin position="1"/>
        <end position="19"/>
    </location>
</feature>
<feature type="chain" id="PRO_0000138937" description="Metalloprotease YcaL">
    <location>
        <begin position="20"/>
        <end position="254"/>
    </location>
</feature>
<feature type="region of interest" description="Disordered" evidence="3">
    <location>
        <begin position="227"/>
        <end position="254"/>
    </location>
</feature>
<feature type="compositionally biased region" description="Basic and acidic residues" evidence="3">
    <location>
        <begin position="242"/>
        <end position="254"/>
    </location>
</feature>
<feature type="active site" evidence="1">
    <location>
        <position position="135"/>
    </location>
</feature>
<feature type="binding site" evidence="1">
    <location>
        <position position="134"/>
    </location>
    <ligand>
        <name>Zn(2+)</name>
        <dbReference type="ChEBI" id="CHEBI:29105"/>
        <note>catalytic</note>
    </ligand>
</feature>
<feature type="binding site" evidence="1">
    <location>
        <position position="138"/>
    </location>
    <ligand>
        <name>Zn(2+)</name>
        <dbReference type="ChEBI" id="CHEBI:29105"/>
        <note>catalytic</note>
    </ligand>
</feature>
<feature type="binding site" evidence="1">
    <location>
        <position position="193"/>
    </location>
    <ligand>
        <name>Zn(2+)</name>
        <dbReference type="ChEBI" id="CHEBI:29105"/>
        <note>catalytic</note>
    </ligand>
</feature>
<feature type="lipid moiety-binding region" description="N-palmitoyl cysteine" evidence="2">
    <location>
        <position position="20"/>
    </location>
</feature>
<feature type="lipid moiety-binding region" description="S-diacylglycerol cysteine" evidence="2">
    <location>
        <position position="20"/>
    </location>
</feature>
<feature type="sequence conflict" description="In Ref. 5; CAA58106." evidence="5" ref="5">
    <original>ERAQHIRDRIASGK</original>
    <variation>DVRNTSVIVSPLVSKSLSSLRWSSASPL</variation>
    <location>
        <begin position="241"/>
        <end position="254"/>
    </location>
</feature>
<dbReference type="EC" id="3.4.-.-" evidence="4"/>
<dbReference type="EMBL" id="U00096">
    <property type="protein sequence ID" value="AAC73995.2"/>
    <property type="molecule type" value="Genomic_DNA"/>
</dbReference>
<dbReference type="EMBL" id="AP009048">
    <property type="protein sequence ID" value="BAA35644.1"/>
    <property type="molecule type" value="Genomic_DNA"/>
</dbReference>
<dbReference type="EMBL" id="U31523">
    <property type="protein sequence ID" value="AAA81515.1"/>
    <property type="status" value="ALT_INIT"/>
    <property type="molecule type" value="Genomic_DNA"/>
</dbReference>
<dbReference type="EMBL" id="X82933">
    <property type="protein sequence ID" value="CAA58106.1"/>
    <property type="molecule type" value="Genomic_DNA"/>
</dbReference>
<dbReference type="PIR" id="D64830">
    <property type="entry name" value="D64830"/>
</dbReference>
<dbReference type="RefSeq" id="NP_415429.2">
    <property type="nucleotide sequence ID" value="NC_000913.3"/>
</dbReference>
<dbReference type="RefSeq" id="WP_001350496.1">
    <property type="nucleotide sequence ID" value="NZ_LN832404.1"/>
</dbReference>
<dbReference type="SMR" id="P43674"/>
<dbReference type="BioGRID" id="4260012">
    <property type="interactions" value="9"/>
</dbReference>
<dbReference type="BioGRID" id="849908">
    <property type="interactions" value="2"/>
</dbReference>
<dbReference type="DIP" id="DIP-11467N"/>
<dbReference type="FunCoup" id="P43674">
    <property type="interactions" value="48"/>
</dbReference>
<dbReference type="IntAct" id="P43674">
    <property type="interactions" value="2"/>
</dbReference>
<dbReference type="STRING" id="511145.b0909"/>
<dbReference type="MEROPS" id="M48.A03"/>
<dbReference type="PaxDb" id="511145-b0909"/>
<dbReference type="EnsemblBacteria" id="AAC73995">
    <property type="protein sequence ID" value="AAC73995"/>
    <property type="gene ID" value="b0909"/>
</dbReference>
<dbReference type="GeneID" id="945534"/>
<dbReference type="KEGG" id="ecj:JW0892"/>
<dbReference type="KEGG" id="eco:b0909"/>
<dbReference type="KEGG" id="ecoc:C3026_05605"/>
<dbReference type="PATRIC" id="fig|1411691.4.peg.1367"/>
<dbReference type="EchoBASE" id="EB2932"/>
<dbReference type="eggNOG" id="COG0501">
    <property type="taxonomic scope" value="Bacteria"/>
</dbReference>
<dbReference type="HOGENOM" id="CLU_074068_0_0_6"/>
<dbReference type="InParanoid" id="P43674"/>
<dbReference type="OMA" id="RPNIPYT"/>
<dbReference type="OrthoDB" id="9810445at2"/>
<dbReference type="PhylomeDB" id="P43674"/>
<dbReference type="BioCyc" id="EcoCyc:G6470-MONOMER"/>
<dbReference type="PRO" id="PR:P43674"/>
<dbReference type="Proteomes" id="UP000000625">
    <property type="component" value="Chromosome"/>
</dbReference>
<dbReference type="GO" id="GO:0016020">
    <property type="term" value="C:membrane"/>
    <property type="evidence" value="ECO:0000318"/>
    <property type="project" value="GO_Central"/>
</dbReference>
<dbReference type="GO" id="GO:0005886">
    <property type="term" value="C:plasma membrane"/>
    <property type="evidence" value="ECO:0007669"/>
    <property type="project" value="UniProtKB-SubCell"/>
</dbReference>
<dbReference type="GO" id="GO:0046872">
    <property type="term" value="F:metal ion binding"/>
    <property type="evidence" value="ECO:0007669"/>
    <property type="project" value="UniProtKB-KW"/>
</dbReference>
<dbReference type="GO" id="GO:0004222">
    <property type="term" value="F:metalloendopeptidase activity"/>
    <property type="evidence" value="ECO:0000318"/>
    <property type="project" value="GO_Central"/>
</dbReference>
<dbReference type="GO" id="GO:0008237">
    <property type="term" value="F:metallopeptidase activity"/>
    <property type="evidence" value="ECO:0000304"/>
    <property type="project" value="EcoCyc"/>
</dbReference>
<dbReference type="GO" id="GO:0051603">
    <property type="term" value="P:proteolysis involved in protein catabolic process"/>
    <property type="evidence" value="ECO:0000269"/>
    <property type="project" value="EcoCyc"/>
</dbReference>
<dbReference type="CDD" id="cd07334">
    <property type="entry name" value="M48C_loiP_like"/>
    <property type="match status" value="1"/>
</dbReference>
<dbReference type="FunFam" id="3.30.2010.10:FF:000004">
    <property type="entry name" value="Metalloprotease YcaL"/>
    <property type="match status" value="1"/>
</dbReference>
<dbReference type="Gene3D" id="3.30.2010.10">
    <property type="entry name" value="Metalloproteases ('zincins'), catalytic domain"/>
    <property type="match status" value="1"/>
</dbReference>
<dbReference type="InterPro" id="IPR051156">
    <property type="entry name" value="Mito/Outer_Membr_Metalloprot"/>
</dbReference>
<dbReference type="InterPro" id="IPR001915">
    <property type="entry name" value="Peptidase_M48"/>
</dbReference>
<dbReference type="PANTHER" id="PTHR22726">
    <property type="entry name" value="METALLOENDOPEPTIDASE OMA1"/>
    <property type="match status" value="1"/>
</dbReference>
<dbReference type="PANTHER" id="PTHR22726:SF8">
    <property type="entry name" value="METALLOPROTEASE YCAL"/>
    <property type="match status" value="1"/>
</dbReference>
<dbReference type="Pfam" id="PF01435">
    <property type="entry name" value="Peptidase_M48"/>
    <property type="match status" value="1"/>
</dbReference>
<dbReference type="PROSITE" id="PS51257">
    <property type="entry name" value="PROKAR_LIPOPROTEIN"/>
    <property type="match status" value="1"/>
</dbReference>
<gene>
    <name type="primary">ycaL</name>
    <name type="ordered locus">b0909</name>
    <name type="ordered locus">JW0892</name>
</gene>
<evidence type="ECO:0000250" key="1">
    <source>
        <dbReference type="UniProtKB" id="O75844"/>
    </source>
</evidence>
<evidence type="ECO:0000255" key="2">
    <source>
        <dbReference type="PROSITE-ProRule" id="PRU00303"/>
    </source>
</evidence>
<evidence type="ECO:0000256" key="3">
    <source>
        <dbReference type="SAM" id="MobiDB-lite"/>
    </source>
</evidence>
<evidence type="ECO:0000269" key="4">
    <source>
    </source>
</evidence>
<evidence type="ECO:0000305" key="5"/>
<sequence>MKNTKLLLAIATSAALLTGCQNTHGIDTNMAISSGLNAYKAATLSDADAKAIANQGCAEMDSGNQVASKSSKYGKRLAKIAKALGNNINGTPVNYKVYMTSDVNAWAMANGCVRVYSGLMDMMNDNEIEGVLGHELGHVALGHSLAEMKASYAIVAARDAISATSGVASQLSRSQLGDIAEGAINAKYSRDKESEADDFSFDLLKKRGISTQGLVGSFETLASLDGGRTQSMFDSHPPSTERAQHIRDRIASGK</sequence>
<reference key="1">
    <citation type="journal article" date="1996" name="DNA Res.">
        <title>A 718-kb DNA sequence of the Escherichia coli K-12 genome corresponding to the 12.7-28.0 min region on the linkage map.</title>
        <authorList>
            <person name="Oshima T."/>
            <person name="Aiba H."/>
            <person name="Baba T."/>
            <person name="Fujita K."/>
            <person name="Hayashi K."/>
            <person name="Honjo A."/>
            <person name="Ikemoto K."/>
            <person name="Inada T."/>
            <person name="Itoh T."/>
            <person name="Kajihara M."/>
            <person name="Kanai K."/>
            <person name="Kashimoto K."/>
            <person name="Kimura S."/>
            <person name="Kitagawa M."/>
            <person name="Makino K."/>
            <person name="Masuda S."/>
            <person name="Miki T."/>
            <person name="Mizobuchi K."/>
            <person name="Mori H."/>
            <person name="Motomura K."/>
            <person name="Nakamura Y."/>
            <person name="Nashimoto H."/>
            <person name="Nishio Y."/>
            <person name="Saito N."/>
            <person name="Sampei G."/>
            <person name="Seki Y."/>
            <person name="Tagami H."/>
            <person name="Takemoto K."/>
            <person name="Wada C."/>
            <person name="Yamamoto Y."/>
            <person name="Yano M."/>
            <person name="Horiuchi T."/>
        </authorList>
    </citation>
    <scope>NUCLEOTIDE SEQUENCE [LARGE SCALE GENOMIC DNA]</scope>
    <source>
        <strain>K12 / W3110 / ATCC 27325 / DSM 5911</strain>
    </source>
</reference>
<reference key="2">
    <citation type="journal article" date="1997" name="Science">
        <title>The complete genome sequence of Escherichia coli K-12.</title>
        <authorList>
            <person name="Blattner F.R."/>
            <person name="Plunkett G. III"/>
            <person name="Bloch C.A."/>
            <person name="Perna N.T."/>
            <person name="Burland V."/>
            <person name="Riley M."/>
            <person name="Collado-Vides J."/>
            <person name="Glasner J.D."/>
            <person name="Rode C.K."/>
            <person name="Mayhew G.F."/>
            <person name="Gregor J."/>
            <person name="Davis N.W."/>
            <person name="Kirkpatrick H.A."/>
            <person name="Goeden M.A."/>
            <person name="Rose D.J."/>
            <person name="Mau B."/>
            <person name="Shao Y."/>
        </authorList>
    </citation>
    <scope>NUCLEOTIDE SEQUENCE [LARGE SCALE GENOMIC DNA]</scope>
    <source>
        <strain>K12 / MG1655 / ATCC 47076</strain>
    </source>
</reference>
<reference key="3">
    <citation type="journal article" date="2006" name="Mol. Syst. Biol.">
        <title>Highly accurate genome sequences of Escherichia coli K-12 strains MG1655 and W3110.</title>
        <authorList>
            <person name="Hayashi K."/>
            <person name="Morooka N."/>
            <person name="Yamamoto Y."/>
            <person name="Fujita K."/>
            <person name="Isono K."/>
            <person name="Choi S."/>
            <person name="Ohtsubo E."/>
            <person name="Baba T."/>
            <person name="Wanner B.L."/>
            <person name="Mori H."/>
            <person name="Horiuchi T."/>
        </authorList>
    </citation>
    <scope>NUCLEOTIDE SEQUENCE [LARGE SCALE GENOMIC DNA]</scope>
    <source>
        <strain>K12 / W3110 / ATCC 27325 / DSM 5911</strain>
    </source>
</reference>
<reference key="4">
    <citation type="submission" date="1995-07" db="EMBL/GenBank/DDBJ databases">
        <authorList>
            <person name="Palma C.A."/>
            <person name="Allen E."/>
            <person name="Araujo R."/>
            <person name="Aparicio A.M."/>
            <person name="Botstein D."/>
            <person name="Cherry M."/>
            <person name="Chung E."/>
            <person name="Dietrich F."/>
            <person name="Duncan M."/>
            <person name="Federspiel N."/>
            <person name="Kalman S."/>
            <person name="Kim K."/>
            <person name="Komp C."/>
            <person name="Lashkari D."/>
            <person name="Lew H."/>
            <person name="Lin D."/>
            <person name="Namath A."/>
            <person name="Oefner P."/>
            <person name="Davis R."/>
        </authorList>
    </citation>
    <scope>NUCLEOTIDE SEQUENCE [GENOMIC DNA] OF 1-183</scope>
    <source>
        <strain>K12 / MG1655 / ATCC 47076</strain>
    </source>
</reference>
<reference key="5">
    <citation type="journal article" date="1995" name="J. Bacteriol.">
        <title>The cmk gene encoding cytidine monophosphate kinase is located in the rpsA operon and is required for normal replication rate in Escherichia coli.</title>
        <authorList>
            <person name="Fricke J."/>
            <person name="Neuhard J."/>
            <person name="Kelln R.A."/>
            <person name="Pedersen S."/>
        </authorList>
    </citation>
    <scope>NUCLEOTIDE SEQUENCE [GENOMIC DNA] OF 150-254</scope>
    <source>
        <strain>K12</strain>
    </source>
</reference>
<reference key="6">
    <citation type="journal article" date="2017" name="J. Bacteriol.">
        <title>Distinctive roles for periplasmic proteases in the maintenance of essential outer membrane protein assembly.</title>
        <authorList>
            <person name="Soltes G.R."/>
            <person name="Martin N.R."/>
            <person name="Park E."/>
            <person name="Sutterlin H.A."/>
            <person name="Silhavy T.J."/>
        </authorList>
    </citation>
    <scope>FUNCTION AS A PROTEASE</scope>
</reference>
<name>YCAL_ECOLI</name>
<keyword id="KW-0997">Cell inner membrane</keyword>
<keyword id="KW-1003">Cell membrane</keyword>
<keyword id="KW-0378">Hydrolase</keyword>
<keyword id="KW-0449">Lipoprotein</keyword>
<keyword id="KW-0472">Membrane</keyword>
<keyword id="KW-0479">Metal-binding</keyword>
<keyword id="KW-0482">Metalloprotease</keyword>
<keyword id="KW-0564">Palmitate</keyword>
<keyword id="KW-0645">Protease</keyword>
<keyword id="KW-1185">Reference proteome</keyword>
<keyword id="KW-0732">Signal</keyword>
<keyword id="KW-0862">Zinc</keyword>